<geneLocation type="chloroplast"/>
<reference key="1">
    <citation type="journal article" date="2004" name="Curr. Genet.">
        <title>Structural features and transcript-editing analysis of sugarcane (Saccharum officinarum L.) chloroplast genome.</title>
        <authorList>
            <person name="Calsa T. Jr."/>
            <person name="Carraro D.M."/>
            <person name="Benatti M.R."/>
            <person name="Barbosa A.C."/>
            <person name="Kitajima J.P."/>
            <person name="Carrer H."/>
        </authorList>
    </citation>
    <scope>NUCLEOTIDE SEQUENCE [LARGE SCALE GENOMIC DNA]</scope>
    <scope>RNA EDITING</scope>
    <source>
        <strain>cv. SP-80-3280</strain>
    </source>
</reference>
<name>RK2_SACHY</name>
<organism>
    <name type="scientific">Saccharum hybrid</name>
    <name type="common">Sugarcane</name>
    <dbReference type="NCBI Taxonomy" id="15819"/>
    <lineage>
        <taxon>Eukaryota</taxon>
        <taxon>Viridiplantae</taxon>
        <taxon>Streptophyta</taxon>
        <taxon>Embryophyta</taxon>
        <taxon>Tracheophyta</taxon>
        <taxon>Spermatophyta</taxon>
        <taxon>Magnoliopsida</taxon>
        <taxon>Liliopsida</taxon>
        <taxon>Poales</taxon>
        <taxon>Poaceae</taxon>
        <taxon>PACMAD clade</taxon>
        <taxon>Panicoideae</taxon>
        <taxon>Andropogonodae</taxon>
        <taxon>Andropogoneae</taxon>
        <taxon>Saccharinae</taxon>
        <taxon>Saccharum</taxon>
    </lineage>
</organism>
<comment type="subunit">
    <text evidence="1">Part of the 50S ribosomal subunit.</text>
</comment>
<comment type="subcellular location">
    <subcellularLocation>
        <location>Plastid</location>
        <location>Chloroplast</location>
    </subcellularLocation>
</comment>
<comment type="RNA editing">
    <location>
        <position position="1" evidence="4"/>
    </location>
    <text>The initiator methionine is created by RNA editing.</text>
</comment>
<comment type="similarity">
    <text evidence="5">Belongs to the universal ribosomal protein uL2 family.</text>
</comment>
<dbReference type="EMBL" id="AE009947">
    <property type="protein sequence ID" value="AAT44673.1"/>
    <property type="molecule type" value="Genomic_DNA"/>
</dbReference>
<dbReference type="SMR" id="Q6L3B9"/>
<dbReference type="GO" id="GO:0009507">
    <property type="term" value="C:chloroplast"/>
    <property type="evidence" value="ECO:0007669"/>
    <property type="project" value="UniProtKB-SubCell"/>
</dbReference>
<dbReference type="GO" id="GO:0005762">
    <property type="term" value="C:mitochondrial large ribosomal subunit"/>
    <property type="evidence" value="ECO:0007669"/>
    <property type="project" value="TreeGrafter"/>
</dbReference>
<dbReference type="GO" id="GO:0019843">
    <property type="term" value="F:rRNA binding"/>
    <property type="evidence" value="ECO:0007669"/>
    <property type="project" value="UniProtKB-UniRule"/>
</dbReference>
<dbReference type="GO" id="GO:0003735">
    <property type="term" value="F:structural constituent of ribosome"/>
    <property type="evidence" value="ECO:0007669"/>
    <property type="project" value="InterPro"/>
</dbReference>
<dbReference type="GO" id="GO:0016740">
    <property type="term" value="F:transferase activity"/>
    <property type="evidence" value="ECO:0007669"/>
    <property type="project" value="InterPro"/>
</dbReference>
<dbReference type="GO" id="GO:0032543">
    <property type="term" value="P:mitochondrial translation"/>
    <property type="evidence" value="ECO:0007669"/>
    <property type="project" value="TreeGrafter"/>
</dbReference>
<dbReference type="FunFam" id="4.10.950.10:FF:000001">
    <property type="entry name" value="50S ribosomal protein L2"/>
    <property type="match status" value="1"/>
</dbReference>
<dbReference type="FunFam" id="2.30.30.30:FF:000008">
    <property type="entry name" value="50S ribosomal protein L2, chloroplastic"/>
    <property type="match status" value="1"/>
</dbReference>
<dbReference type="FunFam" id="2.40.50.140:FF:000029">
    <property type="entry name" value="50S ribosomal protein L2, chloroplastic"/>
    <property type="match status" value="1"/>
</dbReference>
<dbReference type="Gene3D" id="2.30.30.30">
    <property type="match status" value="1"/>
</dbReference>
<dbReference type="Gene3D" id="2.40.50.140">
    <property type="entry name" value="Nucleic acid-binding proteins"/>
    <property type="match status" value="1"/>
</dbReference>
<dbReference type="Gene3D" id="4.10.950.10">
    <property type="entry name" value="Ribosomal protein L2, domain 3"/>
    <property type="match status" value="1"/>
</dbReference>
<dbReference type="HAMAP" id="MF_01320_B">
    <property type="entry name" value="Ribosomal_uL2_B"/>
    <property type="match status" value="1"/>
</dbReference>
<dbReference type="InterPro" id="IPR012340">
    <property type="entry name" value="NA-bd_OB-fold"/>
</dbReference>
<dbReference type="InterPro" id="IPR014722">
    <property type="entry name" value="Rib_uL2_dom2"/>
</dbReference>
<dbReference type="InterPro" id="IPR002171">
    <property type="entry name" value="Ribosomal_uL2"/>
</dbReference>
<dbReference type="InterPro" id="IPR005880">
    <property type="entry name" value="Ribosomal_uL2_bac/org-type"/>
</dbReference>
<dbReference type="InterPro" id="IPR022669">
    <property type="entry name" value="Ribosomal_uL2_C"/>
</dbReference>
<dbReference type="InterPro" id="IPR022671">
    <property type="entry name" value="Ribosomal_uL2_CS"/>
</dbReference>
<dbReference type="InterPro" id="IPR014726">
    <property type="entry name" value="Ribosomal_uL2_dom3"/>
</dbReference>
<dbReference type="InterPro" id="IPR022666">
    <property type="entry name" value="Ribosomal_uL2_RNA-bd_dom"/>
</dbReference>
<dbReference type="InterPro" id="IPR008991">
    <property type="entry name" value="Translation_prot_SH3-like_sf"/>
</dbReference>
<dbReference type="NCBIfam" id="TIGR01171">
    <property type="entry name" value="rplB_bact"/>
    <property type="match status" value="1"/>
</dbReference>
<dbReference type="PANTHER" id="PTHR13691:SF57">
    <property type="entry name" value="LARGE RIBOSOMAL SUBUNIT PROTEIN UL2CZ_UL2CY"/>
    <property type="match status" value="1"/>
</dbReference>
<dbReference type="PANTHER" id="PTHR13691">
    <property type="entry name" value="RIBOSOMAL PROTEIN L2"/>
    <property type="match status" value="1"/>
</dbReference>
<dbReference type="Pfam" id="PF00181">
    <property type="entry name" value="Ribosomal_L2"/>
    <property type="match status" value="1"/>
</dbReference>
<dbReference type="Pfam" id="PF03947">
    <property type="entry name" value="Ribosomal_L2_C"/>
    <property type="match status" value="1"/>
</dbReference>
<dbReference type="PIRSF" id="PIRSF002158">
    <property type="entry name" value="Ribosomal_L2"/>
    <property type="match status" value="1"/>
</dbReference>
<dbReference type="SMART" id="SM01383">
    <property type="entry name" value="Ribosomal_L2"/>
    <property type="match status" value="1"/>
</dbReference>
<dbReference type="SMART" id="SM01382">
    <property type="entry name" value="Ribosomal_L2_C"/>
    <property type="match status" value="1"/>
</dbReference>
<dbReference type="SUPFAM" id="SSF50249">
    <property type="entry name" value="Nucleic acid-binding proteins"/>
    <property type="match status" value="1"/>
</dbReference>
<dbReference type="SUPFAM" id="SSF50104">
    <property type="entry name" value="Translation proteins SH3-like domain"/>
    <property type="match status" value="1"/>
</dbReference>
<dbReference type="PROSITE" id="PS00467">
    <property type="entry name" value="RIBOSOMAL_L2"/>
    <property type="match status" value="1"/>
</dbReference>
<protein>
    <recommendedName>
        <fullName evidence="2">Large ribosomal subunit protein uL2cz/uL2cy</fullName>
    </recommendedName>
    <alternativeName>
        <fullName evidence="5">50S ribosomal protein L2, chloroplastic</fullName>
    </alternativeName>
</protein>
<feature type="chain" id="PRO_0000129701" description="Large ribosomal subunit protein uL2cz/uL2cy">
    <location>
        <begin position="1"/>
        <end position="273"/>
    </location>
</feature>
<feature type="region of interest" description="Disordered" evidence="3">
    <location>
        <begin position="1"/>
        <end position="22"/>
    </location>
</feature>
<feature type="region of interest" description="Disordered" evidence="3">
    <location>
        <begin position="225"/>
        <end position="273"/>
    </location>
</feature>
<gene>
    <name type="primary">rpl2-A</name>
    <name type="ordered locus">PS009.1</name>
</gene>
<gene>
    <name type="primary">rpl2-B</name>
    <name type="ordered locus">PS077</name>
</gene>
<proteinExistence type="evidence at transcript level"/>
<keyword id="KW-0150">Chloroplast</keyword>
<keyword id="KW-0934">Plastid</keyword>
<keyword id="KW-0687">Ribonucleoprotein</keyword>
<keyword id="KW-0689">Ribosomal protein</keyword>
<keyword id="KW-0691">RNA editing</keyword>
<accession>Q6L3B9</accession>
<sequence length="273" mass="30051">MAKHLYKTPIPSTRKGTVDRQVKSNPRNKLIHGRHRCGKGRNARGIITARHRGGGHKRLYRKIDFRRNQKDISGRIVTIEYDPNRNAYICLIHYGDGEKRYILHPRGAIIGDTIVSGTKVPISMGNALPLTDMPLGTAIHNIEITRGRGGQLARAAGAVAKLIAKEGKLATLRLPSGEVRLVSQNCLATVGQVGNVGVNQKSLGRAGSKCWLGKRPVVRGVVMNPVDHPHGGGEGKAPIGRKKPTTPWGYPALGRRTRKRKKYSDSFILRRRK</sequence>
<evidence type="ECO:0000250" key="1"/>
<evidence type="ECO:0000255" key="2">
    <source>
        <dbReference type="HAMAP-Rule" id="MF_01320"/>
    </source>
</evidence>
<evidence type="ECO:0000256" key="3">
    <source>
        <dbReference type="SAM" id="MobiDB-lite"/>
    </source>
</evidence>
<evidence type="ECO:0000269" key="4">
    <source>
    </source>
</evidence>
<evidence type="ECO:0000305" key="5"/>